<feature type="chain" id="PRO_0000229528" description="Small ribosomal subunit protein bS6">
    <location>
        <begin position="1"/>
        <end position="124"/>
    </location>
</feature>
<feature type="region of interest" description="Disordered" evidence="2">
    <location>
        <begin position="96"/>
        <end position="124"/>
    </location>
</feature>
<feature type="compositionally biased region" description="Low complexity" evidence="2">
    <location>
        <begin position="114"/>
        <end position="124"/>
    </location>
</feature>
<proteinExistence type="inferred from homology"/>
<organism>
    <name type="scientific">Burkholderia pseudomallei (strain 1710b)</name>
    <dbReference type="NCBI Taxonomy" id="320372"/>
    <lineage>
        <taxon>Bacteria</taxon>
        <taxon>Pseudomonadati</taxon>
        <taxon>Pseudomonadota</taxon>
        <taxon>Betaproteobacteria</taxon>
        <taxon>Burkholderiales</taxon>
        <taxon>Burkholderiaceae</taxon>
        <taxon>Burkholderia</taxon>
        <taxon>pseudomallei group</taxon>
    </lineage>
</organism>
<protein>
    <recommendedName>
        <fullName evidence="1">Small ribosomal subunit protein bS6</fullName>
    </recommendedName>
    <alternativeName>
        <fullName evidence="3">30S ribosomal protein S6</fullName>
    </alternativeName>
</protein>
<comment type="function">
    <text evidence="1">Binds together with bS18 to 16S ribosomal RNA.</text>
</comment>
<comment type="similarity">
    <text evidence="1">Belongs to the bacterial ribosomal protein bS6 family.</text>
</comment>
<gene>
    <name evidence="1" type="primary">rpsF</name>
    <name type="ordered locus">BURPS1710b_2416</name>
</gene>
<keyword id="KW-0687">Ribonucleoprotein</keyword>
<keyword id="KW-0689">Ribosomal protein</keyword>
<keyword id="KW-0694">RNA-binding</keyword>
<keyword id="KW-0699">rRNA-binding</keyword>
<accession>Q3JRJ2</accession>
<reference key="1">
    <citation type="journal article" date="2010" name="Genome Biol. Evol.">
        <title>Continuing evolution of Burkholderia mallei through genome reduction and large-scale rearrangements.</title>
        <authorList>
            <person name="Losada L."/>
            <person name="Ronning C.M."/>
            <person name="DeShazer D."/>
            <person name="Woods D."/>
            <person name="Fedorova N."/>
            <person name="Kim H.S."/>
            <person name="Shabalina S.A."/>
            <person name="Pearson T.R."/>
            <person name="Brinkac L."/>
            <person name="Tan P."/>
            <person name="Nandi T."/>
            <person name="Crabtree J."/>
            <person name="Badger J."/>
            <person name="Beckstrom-Sternberg S."/>
            <person name="Saqib M."/>
            <person name="Schutzer S.E."/>
            <person name="Keim P."/>
            <person name="Nierman W.C."/>
        </authorList>
    </citation>
    <scope>NUCLEOTIDE SEQUENCE [LARGE SCALE GENOMIC DNA]</scope>
    <source>
        <strain>1710b</strain>
    </source>
</reference>
<evidence type="ECO:0000255" key="1">
    <source>
        <dbReference type="HAMAP-Rule" id="MF_00360"/>
    </source>
</evidence>
<evidence type="ECO:0000256" key="2">
    <source>
        <dbReference type="SAM" id="MobiDB-lite"/>
    </source>
</evidence>
<evidence type="ECO:0000305" key="3"/>
<name>RS6_BURP1</name>
<sequence>MRHYEIVFIVHPDQSEQVPAMIERYKSTITSHGGQIHRVEDWGRRQLAYMIEKLAKAHYVCMNIECDQTTLDELEHAFKFNDAVLRHLIVKMKKAETGPSPMMKEVQREEAKKAAAAQPTEAQA</sequence>
<dbReference type="EMBL" id="CP000124">
    <property type="protein sequence ID" value="ABA49393.1"/>
    <property type="molecule type" value="Genomic_DNA"/>
</dbReference>
<dbReference type="RefSeq" id="WP_004193673.1">
    <property type="nucleotide sequence ID" value="NC_007434.1"/>
</dbReference>
<dbReference type="SMR" id="Q3JRJ2"/>
<dbReference type="EnsemblBacteria" id="ABA49393">
    <property type="protein sequence ID" value="ABA49393"/>
    <property type="gene ID" value="BURPS1710b_2416"/>
</dbReference>
<dbReference type="GeneID" id="93060533"/>
<dbReference type="KEGG" id="bpm:BURPS1710b_2416"/>
<dbReference type="HOGENOM" id="CLU_113441_6_1_4"/>
<dbReference type="Proteomes" id="UP000002700">
    <property type="component" value="Chromosome I"/>
</dbReference>
<dbReference type="GO" id="GO:0022627">
    <property type="term" value="C:cytosolic small ribosomal subunit"/>
    <property type="evidence" value="ECO:0007669"/>
    <property type="project" value="TreeGrafter"/>
</dbReference>
<dbReference type="GO" id="GO:0070181">
    <property type="term" value="F:small ribosomal subunit rRNA binding"/>
    <property type="evidence" value="ECO:0007669"/>
    <property type="project" value="TreeGrafter"/>
</dbReference>
<dbReference type="GO" id="GO:0003735">
    <property type="term" value="F:structural constituent of ribosome"/>
    <property type="evidence" value="ECO:0007669"/>
    <property type="project" value="InterPro"/>
</dbReference>
<dbReference type="GO" id="GO:0006412">
    <property type="term" value="P:translation"/>
    <property type="evidence" value="ECO:0007669"/>
    <property type="project" value="UniProtKB-UniRule"/>
</dbReference>
<dbReference type="CDD" id="cd00473">
    <property type="entry name" value="bS6"/>
    <property type="match status" value="1"/>
</dbReference>
<dbReference type="Gene3D" id="3.30.70.60">
    <property type="match status" value="1"/>
</dbReference>
<dbReference type="HAMAP" id="MF_00360">
    <property type="entry name" value="Ribosomal_bS6"/>
    <property type="match status" value="1"/>
</dbReference>
<dbReference type="InterPro" id="IPR000529">
    <property type="entry name" value="Ribosomal_bS6"/>
</dbReference>
<dbReference type="InterPro" id="IPR035980">
    <property type="entry name" value="Ribosomal_bS6_sf"/>
</dbReference>
<dbReference type="InterPro" id="IPR020814">
    <property type="entry name" value="Ribosomal_S6_plastid/chlpt"/>
</dbReference>
<dbReference type="InterPro" id="IPR014717">
    <property type="entry name" value="Transl_elong_EF1B/ribsomal_bS6"/>
</dbReference>
<dbReference type="NCBIfam" id="TIGR00166">
    <property type="entry name" value="S6"/>
    <property type="match status" value="1"/>
</dbReference>
<dbReference type="PANTHER" id="PTHR21011">
    <property type="entry name" value="MITOCHONDRIAL 28S RIBOSOMAL PROTEIN S6"/>
    <property type="match status" value="1"/>
</dbReference>
<dbReference type="PANTHER" id="PTHR21011:SF1">
    <property type="entry name" value="SMALL RIBOSOMAL SUBUNIT PROTEIN BS6M"/>
    <property type="match status" value="1"/>
</dbReference>
<dbReference type="Pfam" id="PF01250">
    <property type="entry name" value="Ribosomal_S6"/>
    <property type="match status" value="1"/>
</dbReference>
<dbReference type="SUPFAM" id="SSF54995">
    <property type="entry name" value="Ribosomal protein S6"/>
    <property type="match status" value="1"/>
</dbReference>